<accession>B8G1Z2</accession>
<gene>
    <name evidence="1" type="primary">rpsK</name>
    <name type="ordered locus">Dhaf_0448</name>
</gene>
<reference key="1">
    <citation type="journal article" date="2012" name="BMC Microbiol.">
        <title>Genome sequence of Desulfitobacterium hafniense DCB-2, a Gram-positive anaerobe capable of dehalogenation and metal reduction.</title>
        <authorList>
            <person name="Kim S.H."/>
            <person name="Harzman C."/>
            <person name="Davis J.K."/>
            <person name="Hutcheson R."/>
            <person name="Broderick J.B."/>
            <person name="Marsh T.L."/>
            <person name="Tiedje J.M."/>
        </authorList>
    </citation>
    <scope>NUCLEOTIDE SEQUENCE [LARGE SCALE GENOMIC DNA]</scope>
    <source>
        <strain>DSM 10664 / DCB-2</strain>
    </source>
</reference>
<organism>
    <name type="scientific">Desulfitobacterium hafniense (strain DSM 10664 / DCB-2)</name>
    <dbReference type="NCBI Taxonomy" id="272564"/>
    <lineage>
        <taxon>Bacteria</taxon>
        <taxon>Bacillati</taxon>
        <taxon>Bacillota</taxon>
        <taxon>Clostridia</taxon>
        <taxon>Eubacteriales</taxon>
        <taxon>Desulfitobacteriaceae</taxon>
        <taxon>Desulfitobacterium</taxon>
    </lineage>
</organism>
<keyword id="KW-0687">Ribonucleoprotein</keyword>
<keyword id="KW-0689">Ribosomal protein</keyword>
<keyword id="KW-0694">RNA-binding</keyword>
<keyword id="KW-0699">rRNA-binding</keyword>
<proteinExistence type="inferred from homology"/>
<sequence>MARKVVRTKRRERKNIATGVAHIKSTFNNSMVTITDPKGNVISWSSAGALGFKGSRKSTPYAAQMAAETAAKAAMEHGLKEVECFVKGPGAGREAAIRALQAAGLEVNMIKDVTPIPHNGCRPPKRRRV</sequence>
<dbReference type="EMBL" id="CP001336">
    <property type="protein sequence ID" value="ACL18515.1"/>
    <property type="molecule type" value="Genomic_DNA"/>
</dbReference>
<dbReference type="RefSeq" id="WP_005810114.1">
    <property type="nucleotide sequence ID" value="NC_011830.1"/>
</dbReference>
<dbReference type="SMR" id="B8G1Z2"/>
<dbReference type="KEGG" id="dhd:Dhaf_0448"/>
<dbReference type="HOGENOM" id="CLU_072439_5_0_9"/>
<dbReference type="Proteomes" id="UP000007726">
    <property type="component" value="Chromosome"/>
</dbReference>
<dbReference type="GO" id="GO:1990904">
    <property type="term" value="C:ribonucleoprotein complex"/>
    <property type="evidence" value="ECO:0007669"/>
    <property type="project" value="UniProtKB-KW"/>
</dbReference>
<dbReference type="GO" id="GO:0005840">
    <property type="term" value="C:ribosome"/>
    <property type="evidence" value="ECO:0007669"/>
    <property type="project" value="UniProtKB-KW"/>
</dbReference>
<dbReference type="GO" id="GO:0019843">
    <property type="term" value="F:rRNA binding"/>
    <property type="evidence" value="ECO:0007669"/>
    <property type="project" value="UniProtKB-UniRule"/>
</dbReference>
<dbReference type="GO" id="GO:0003735">
    <property type="term" value="F:structural constituent of ribosome"/>
    <property type="evidence" value="ECO:0007669"/>
    <property type="project" value="InterPro"/>
</dbReference>
<dbReference type="GO" id="GO:0006412">
    <property type="term" value="P:translation"/>
    <property type="evidence" value="ECO:0007669"/>
    <property type="project" value="UniProtKB-UniRule"/>
</dbReference>
<dbReference type="FunFam" id="3.30.420.80:FF:000001">
    <property type="entry name" value="30S ribosomal protein S11"/>
    <property type="match status" value="1"/>
</dbReference>
<dbReference type="Gene3D" id="3.30.420.80">
    <property type="entry name" value="Ribosomal protein S11"/>
    <property type="match status" value="1"/>
</dbReference>
<dbReference type="HAMAP" id="MF_01310">
    <property type="entry name" value="Ribosomal_uS11"/>
    <property type="match status" value="1"/>
</dbReference>
<dbReference type="InterPro" id="IPR001971">
    <property type="entry name" value="Ribosomal_uS11"/>
</dbReference>
<dbReference type="InterPro" id="IPR019981">
    <property type="entry name" value="Ribosomal_uS11_bac-type"/>
</dbReference>
<dbReference type="InterPro" id="IPR018102">
    <property type="entry name" value="Ribosomal_uS11_CS"/>
</dbReference>
<dbReference type="InterPro" id="IPR036967">
    <property type="entry name" value="Ribosomal_uS11_sf"/>
</dbReference>
<dbReference type="NCBIfam" id="NF003698">
    <property type="entry name" value="PRK05309.1"/>
    <property type="match status" value="1"/>
</dbReference>
<dbReference type="NCBIfam" id="TIGR03632">
    <property type="entry name" value="uS11_bact"/>
    <property type="match status" value="1"/>
</dbReference>
<dbReference type="PANTHER" id="PTHR11759">
    <property type="entry name" value="40S RIBOSOMAL PROTEIN S14/30S RIBOSOMAL PROTEIN S11"/>
    <property type="match status" value="1"/>
</dbReference>
<dbReference type="Pfam" id="PF00411">
    <property type="entry name" value="Ribosomal_S11"/>
    <property type="match status" value="1"/>
</dbReference>
<dbReference type="PIRSF" id="PIRSF002131">
    <property type="entry name" value="Ribosomal_S11"/>
    <property type="match status" value="1"/>
</dbReference>
<dbReference type="SUPFAM" id="SSF53137">
    <property type="entry name" value="Translational machinery components"/>
    <property type="match status" value="1"/>
</dbReference>
<dbReference type="PROSITE" id="PS00054">
    <property type="entry name" value="RIBOSOMAL_S11"/>
    <property type="match status" value="1"/>
</dbReference>
<comment type="function">
    <text evidence="1">Located on the platform of the 30S subunit, it bridges several disparate RNA helices of the 16S rRNA. Forms part of the Shine-Dalgarno cleft in the 70S ribosome.</text>
</comment>
<comment type="subunit">
    <text evidence="1">Part of the 30S ribosomal subunit. Interacts with proteins S7 and S18. Binds to IF-3.</text>
</comment>
<comment type="similarity">
    <text evidence="1">Belongs to the universal ribosomal protein uS11 family.</text>
</comment>
<protein>
    <recommendedName>
        <fullName evidence="1">Small ribosomal subunit protein uS11</fullName>
    </recommendedName>
    <alternativeName>
        <fullName evidence="2">30S ribosomal protein S11</fullName>
    </alternativeName>
</protein>
<evidence type="ECO:0000255" key="1">
    <source>
        <dbReference type="HAMAP-Rule" id="MF_01310"/>
    </source>
</evidence>
<evidence type="ECO:0000305" key="2"/>
<feature type="chain" id="PRO_1000165545" description="Small ribosomal subunit protein uS11">
    <location>
        <begin position="1"/>
        <end position="129"/>
    </location>
</feature>
<name>RS11_DESHD</name>